<reference key="1">
    <citation type="journal article" date="1989" name="Proc. Natl. Acad. Sci. U.S.A.">
        <title>Isolation and structural characterization of cDNA clones encoding the mating pheromone Er-1 secreted by the ciliate Euplotes raikovi.</title>
        <authorList>
            <person name="Miceli C."/>
            <person name="Laterza A."/>
            <person name="Melli M."/>
        </authorList>
    </citation>
    <scope>NUCLEOTIDE SEQUENCE [MRNA] (ISOFORM 1)</scope>
</reference>
<reference key="2">
    <citation type="journal article" date="1992" name="Proc. Natl. Acad. Sci. U.S.A.">
        <title>Identification and structural characterization of a cDNA clone encoding a membrane-bound form of the polypeptide pheromone Er-1 in the ciliate protozoan Euplotes raikovi.</title>
        <authorList>
            <person name="Miceli C."/>
            <person name="La Terza A."/>
            <person name="Bradshaw R.A."/>
            <person name="Luporini P."/>
        </authorList>
    </citation>
    <scope>NUCLEOTIDE SEQUENCE [MRNA] (ISOFORM 2)</scope>
</reference>
<reference key="3">
    <citation type="journal article" date="1988" name="J. Biol. Chem.">
        <title>Primary structure of the mating pheromone Er-1 of the ciliate Euplotes raikovi.</title>
        <authorList>
            <person name="Raffioni S."/>
            <person name="Luporini P."/>
            <person name="Chait B.T."/>
            <person name="Disper S.S."/>
            <person name="Bradshaw R.A."/>
        </authorList>
    </citation>
    <scope>PROTEIN SEQUENCE OF 36-75</scope>
</reference>
<reference key="4">
    <citation type="journal article" date="1992" name="Proc. Natl. Acad. Sci. U.S.A.">
        <title>Primary structure of Euplotes raikovi pheromones: comparison of five sequences of pheromones from cells with variable mating interactions.</title>
        <authorList>
            <person name="Raffioni S."/>
            <person name="Miceli C."/>
            <person name="Vallesi A."/>
            <person name="Chowdhury S.K."/>
            <person name="Chait B.T."/>
            <person name="Luporini P."/>
            <person name="Bradshaw R.A."/>
        </authorList>
    </citation>
    <scope>PROTEIN SEQUENCE OF 36-75</scope>
    <scope>MASS SPECTROMETRY</scope>
    <source>
        <strain>13</strain>
    </source>
</reference>
<reference key="5">
    <citation type="journal article" date="1992" name="Protein Sci.">
        <title>The disulfide bond pairing of the pheromones Er-1 and Er-2 of the ciliated protozoan Euplotes raikovi.</title>
        <authorList>
            <person name="Stewart A.E."/>
            <person name="Raffioni S."/>
            <person name="Chaudhary T."/>
            <person name="Chait B.T."/>
            <person name="Luporini P."/>
            <person name="Bradshaw R.A."/>
        </authorList>
    </citation>
    <scope>DISULFIDE BONDS</scope>
</reference>
<reference key="6">
    <citation type="journal article" date="2000" name="Mol. Biol. Cell">
        <title>The autocrine mitogenic loop of the ciliate Euplotes raikovi: the pheromone membrane-bound forms are the cell binding sites and potential signaling receptors of soluble pheromones.</title>
        <authorList>
            <person name="Ortenzi C."/>
            <person name="Alimenti C."/>
            <person name="Vallesi A."/>
            <person name="Di Pretoro B."/>
            <person name="Terza A.L."/>
            <person name="Luporini P."/>
        </authorList>
    </citation>
    <scope>CHARACTERIZATION</scope>
</reference>
<reference key="7">
    <citation type="journal article" date="1994" name="Protein Sci.">
        <title>The NMR solution structure of the pheromone Er-1 from the ciliated protozoan Euplotes raikovi.</title>
        <authorList>
            <person name="Mronga S."/>
            <person name="Luginbuhl P."/>
            <person name="Brown L.R."/>
            <person name="Ortenzi C."/>
            <person name="Luporini P."/>
            <person name="Bradshaw R.A."/>
            <person name="Wuethrich K."/>
        </authorList>
    </citation>
    <scope>STRUCTURE BY NMR</scope>
</reference>
<reference key="8">
    <citation type="journal article" date="1995" name="Proc. Natl. Acad. Sci. U.S.A.">
        <title>A cooperative model for receptor recognition and cell adhesion: evidence from the molecular packing in the 1.6-A crystal structure of the pheromone Er-1 from the ciliated protozoan Euplotes raikovi.</title>
        <authorList>
            <person name="Weiss M.S."/>
            <person name="Anderson D.H."/>
            <person name="Raffioni S."/>
            <person name="Bradshaw R.A."/>
            <person name="Ortenzi C."/>
            <person name="Luporini P."/>
            <person name="Eisenberg D."/>
        </authorList>
    </citation>
    <scope>X-RAY CRYSTALLOGRAPHY (1.0 ANGSTROMS)</scope>
</reference>
<reference key="9">
    <citation type="journal article" date="1997" name="J. Mol. Biol.">
        <title>Charges, hydrogen bonds, and correlated motions in the 1-A resolution refined structure of the mating pheromone Er-1 from Euplotes raikovi.</title>
        <authorList>
            <person name="Anderson D.H."/>
            <person name="Weiss M.S."/>
            <person name="Eisenberg D."/>
        </authorList>
    </citation>
    <scope>X-RAY CRYSTALLOGRAPHY (1.0 ANGSTROMS)</scope>
</reference>
<accession>P10774</accession>
<accession>Q27149</accession>
<organism>
    <name type="scientific">Euplotes raikovi</name>
    <dbReference type="NCBI Taxonomy" id="5938"/>
    <lineage>
        <taxon>Eukaryota</taxon>
        <taxon>Sar</taxon>
        <taxon>Alveolata</taxon>
        <taxon>Ciliophora</taxon>
        <taxon>Intramacronucleata</taxon>
        <taxon>Spirotrichea</taxon>
        <taxon>Hypotrichia</taxon>
        <taxon>Euplotida</taxon>
        <taxon>Euplotidae</taxon>
        <taxon>Euplotes</taxon>
    </lineage>
</organism>
<feature type="signal peptide" evidence="1">
    <location>
        <begin position="1"/>
        <end position="19"/>
    </location>
</feature>
<feature type="propeptide" id="PRO_0000008668" evidence="3 4">
    <location>
        <begin position="20"/>
        <end position="35"/>
    </location>
</feature>
<feature type="peptide" id="PRO_0000008669" description="Mating pheromone Er-1/Er-3" evidence="4">
    <location>
        <begin position="36"/>
        <end position="75"/>
    </location>
</feature>
<feature type="disulfide bond" evidence="2">
    <location>
        <begin position="38"/>
        <end position="54"/>
    </location>
</feature>
<feature type="disulfide bond" evidence="2">
    <location>
        <begin position="45"/>
        <end position="71"/>
    </location>
</feature>
<feature type="disulfide bond" evidence="2">
    <location>
        <begin position="50"/>
        <end position="63"/>
    </location>
</feature>
<feature type="splice variant" id="VSP_011848" description="In isoform 2." evidence="5">
    <original>M</original>
    <variation>MGCTSDLCHMASVLSKYQSLFLYLCRSNNCVGPLNSINRFFSGTVHVISFSINFRM</variation>
    <location>
        <position position="1"/>
    </location>
</feature>
<feature type="sequence conflict" description="In Ref. 2; AAA29124." evidence="6" ref="2">
    <original>R</original>
    <variation>S</variation>
    <location>
        <position position="25"/>
    </location>
</feature>
<feature type="helix" evidence="7">
    <location>
        <begin position="37"/>
        <end position="44"/>
    </location>
</feature>
<feature type="helix" evidence="7">
    <location>
        <begin position="48"/>
        <end position="53"/>
    </location>
</feature>
<feature type="helix" evidence="7">
    <location>
        <begin position="58"/>
        <end position="70"/>
    </location>
</feature>
<feature type="turn" evidence="7">
    <location>
        <begin position="72"/>
        <end position="74"/>
    </location>
</feature>
<comment type="function">
    <text>Mating ciliate pheromones (or gamones) are diffusible extracellular communication signals that distinguish different intraspecific classes of cells commonly referred to as 'mating types'. They prepare the latter for conjugation by changing their cell surface properties. The membrane-bound form promotes inter-cellular communication and adhesion for mating pair formation and may act as binding site for the secreted form.</text>
</comment>
<comment type="subunit">
    <text evidence="6">Homodimer.</text>
</comment>
<comment type="subcellular location">
    <molecule>Isoform 1</molecule>
    <subcellularLocation>
        <location>Secreted</location>
    </subcellularLocation>
</comment>
<comment type="subcellular location">
    <molecule>Isoform 2</molecule>
    <subcellularLocation>
        <location>Cell membrane</location>
    </subcellularLocation>
</comment>
<comment type="alternative products">
    <event type="alternative splicing"/>
    <isoform>
        <id>P10774-1</id>
        <name>1</name>
        <sequence type="displayed"/>
    </isoform>
    <isoform>
        <id>P10774-2</id>
        <name>2</name>
        <name>Er-1 mem</name>
        <sequence type="described" ref="VSP_011848"/>
    </isoform>
</comment>
<comment type="mass spectrometry" mass="4410.5" method="Plasma desorption" evidence="3"/>
<comment type="miscellaneous">
    <molecule>Isoform 1</molecule>
    <text>Secreted.</text>
</comment>
<comment type="miscellaneous">
    <molecule>Isoform 2</molecule>
    <text evidence="6">Membrane bound.</text>
</comment>
<proteinExistence type="evidence at protein level"/>
<gene>
    <name type="primary">MAT1</name>
</gene>
<gene>
    <name type="primary">MAT3</name>
</gene>
<protein>
    <recommendedName>
        <fullName>Mating pheromone Er-1/Er-3</fullName>
    </recommendedName>
    <alternativeName>
        <fullName>Euplomone R1/R3</fullName>
    </alternativeName>
</protein>
<sequence length="75" mass="8282">MNKLAILAIIAMVLFSANAFRFQSRLRSNVEAKTGDACEQAAIQCVESACESLCTEGEDRTGCYMYIYSNCPPYV</sequence>
<keyword id="KW-0002">3D-structure</keyword>
<keyword id="KW-0025">Alternative splicing</keyword>
<keyword id="KW-1003">Cell membrane</keyword>
<keyword id="KW-0903">Direct protein sequencing</keyword>
<keyword id="KW-1015">Disulfide bond</keyword>
<keyword id="KW-0472">Membrane</keyword>
<keyword id="KW-0588">Pheromone</keyword>
<keyword id="KW-0964">Secreted</keyword>
<keyword id="KW-0732">Signal</keyword>
<evidence type="ECO:0000255" key="1"/>
<evidence type="ECO:0000269" key="2">
    <source>
    </source>
</evidence>
<evidence type="ECO:0000269" key="3">
    <source>
    </source>
</evidence>
<evidence type="ECO:0000269" key="4">
    <source>
    </source>
</evidence>
<evidence type="ECO:0000303" key="5">
    <source>
    </source>
</evidence>
<evidence type="ECO:0000305" key="6"/>
<evidence type="ECO:0007829" key="7">
    <source>
        <dbReference type="PDB" id="6E6O"/>
    </source>
</evidence>
<dbReference type="EMBL" id="J04141">
    <property type="protein sequence ID" value="AAA99212.1"/>
    <property type="molecule type" value="mRNA"/>
</dbReference>
<dbReference type="EMBL" id="M86864">
    <property type="protein sequence ID" value="AAA29124.1"/>
    <property type="molecule type" value="mRNA"/>
</dbReference>
<dbReference type="PIR" id="A38236">
    <property type="entry name" value="A38236"/>
</dbReference>
<dbReference type="PDB" id="1ERC">
    <property type="method" value="NMR"/>
    <property type="chains" value="A=36-75"/>
</dbReference>
<dbReference type="PDB" id="2ERL">
    <property type="method" value="X-ray"/>
    <property type="resolution" value="1.00 A"/>
    <property type="chains" value="A=36-75"/>
</dbReference>
<dbReference type="PDB" id="6E6O">
    <property type="method" value="X-ray"/>
    <property type="resolution" value="0.70 A"/>
    <property type="chains" value="A=36-75"/>
</dbReference>
<dbReference type="PDBsum" id="1ERC"/>
<dbReference type="PDBsum" id="2ERL"/>
<dbReference type="PDBsum" id="6E6O"/>
<dbReference type="SMR" id="P10774"/>
<dbReference type="EvolutionaryTrace" id="P10774"/>
<dbReference type="GO" id="GO:0005576">
    <property type="term" value="C:extracellular region"/>
    <property type="evidence" value="ECO:0007669"/>
    <property type="project" value="UniProtKB-SubCell"/>
</dbReference>
<dbReference type="GO" id="GO:0005886">
    <property type="term" value="C:plasma membrane"/>
    <property type="evidence" value="ECO:0007669"/>
    <property type="project" value="UniProtKB-SubCell"/>
</dbReference>
<dbReference type="GO" id="GO:0005186">
    <property type="term" value="F:pheromone activity"/>
    <property type="evidence" value="ECO:0007669"/>
    <property type="project" value="UniProtKB-KW"/>
</dbReference>
<dbReference type="CDD" id="cd23510">
    <property type="entry name" value="MER1_2_10"/>
    <property type="match status" value="1"/>
</dbReference>
<dbReference type="Gene3D" id="1.20.50.10">
    <property type="entry name" value="Pheromone ER-1"/>
    <property type="match status" value="1"/>
</dbReference>
<dbReference type="InterPro" id="IPR016058">
    <property type="entry name" value="Pheromone_Er1_protoz"/>
</dbReference>
<dbReference type="InterPro" id="IPR009064">
    <property type="entry name" value="Pheromone_protoz"/>
</dbReference>
<dbReference type="InterPro" id="IPR036245">
    <property type="entry name" value="Pheromone_protoz_sf"/>
</dbReference>
<dbReference type="Pfam" id="PF06360">
    <property type="entry name" value="E_raikovi_mat"/>
    <property type="match status" value="1"/>
</dbReference>
<dbReference type="SUPFAM" id="SSF47014">
    <property type="entry name" value="Protozoan pheromone proteins"/>
    <property type="match status" value="1"/>
</dbReference>
<name>MER1_EUPRA</name>